<comment type="function">
    <text evidence="2 3">Nerve growth factor is important for the development and maintenance of the sympathetic and sensory nervous systems. It stimulates division and differentiation of sympathetic and embryonic sensory neurons as well as basal forebrain cholinergic neurons in the brain. Its relevance in the snake venom is not clear. However, it has been shown to inhibit metalloproteinase-dependent proteolysis of platelet glycoprotein Ib alpha, suggesting a metalloproteinase inhibition to prevent metalloprotease autodigestion and/or protection against prey proteases (By similarity). Binds a lipid between the two protein chains in the homodimer. The lipid-bound form promotes histamine relase from mouse mast cells, contrary to the lipid-free form (By similarity).</text>
</comment>
<comment type="subunit">
    <text evidence="2">Homodimer; non-covalently linked.</text>
</comment>
<comment type="subcellular location">
    <subcellularLocation>
        <location evidence="2">Secreted</location>
    </subcellularLocation>
</comment>
<comment type="tissue specificity">
    <text>Expressed by the venom gland.</text>
</comment>
<comment type="similarity">
    <text evidence="6">Belongs to the NGF-beta family.</text>
</comment>
<name>NGFV3_DEMVE</name>
<keyword id="KW-0165">Cleavage on pair of basic residues</keyword>
<keyword id="KW-1015">Disulfide bond</keyword>
<keyword id="KW-0325">Glycoprotein</keyword>
<keyword id="KW-0339">Growth factor</keyword>
<keyword id="KW-0446">Lipid-binding</keyword>
<keyword id="KW-0481">Metalloenzyme inhibitor</keyword>
<keyword id="KW-0483">Metalloprotease inhibitor</keyword>
<keyword id="KW-0646">Protease inhibitor</keyword>
<keyword id="KW-0964">Secreted</keyword>
<keyword id="KW-0732">Signal</keyword>
<keyword id="KW-0800">Toxin</keyword>
<organism>
    <name type="scientific">Demansia vestigiata</name>
    <name type="common">Lesser black whip snake</name>
    <name type="synonym">Demansia atra</name>
    <dbReference type="NCBI Taxonomy" id="412038"/>
    <lineage>
        <taxon>Eukaryota</taxon>
        <taxon>Metazoa</taxon>
        <taxon>Chordata</taxon>
        <taxon>Craniata</taxon>
        <taxon>Vertebrata</taxon>
        <taxon>Euteleostomi</taxon>
        <taxon>Lepidosauria</taxon>
        <taxon>Squamata</taxon>
        <taxon>Bifurcata</taxon>
        <taxon>Unidentata</taxon>
        <taxon>Episquamata</taxon>
        <taxon>Toxicofera</taxon>
        <taxon>Serpentes</taxon>
        <taxon>Colubroidea</taxon>
        <taxon>Elapidae</taxon>
        <taxon>Notechinae</taxon>
        <taxon>Demansia</taxon>
    </lineage>
</organism>
<feature type="signal peptide" evidence="4">
    <location>
        <begin position="1"/>
        <end position="18"/>
    </location>
</feature>
<feature type="propeptide" id="PRO_5000254123" evidence="1">
    <location>
        <begin position="19"/>
        <end position="125"/>
    </location>
</feature>
<feature type="chain" id="PRO_5000254124" description="Venom nerve growth factor 3">
    <location>
        <begin position="126"/>
        <end position="242"/>
    </location>
</feature>
<feature type="region of interest" description="Disordered" evidence="5">
    <location>
        <begin position="48"/>
        <end position="69"/>
    </location>
</feature>
<feature type="compositionally biased region" description="Basic and acidic residues" evidence="5">
    <location>
        <begin position="48"/>
        <end position="66"/>
    </location>
</feature>
<feature type="glycosylation site" description="N-linked (GlcNAc...) asparagine" evidence="4">
    <location>
        <position position="147"/>
    </location>
</feature>
<feature type="disulfide bond" evidence="2">
    <location>
        <begin position="139"/>
        <end position="203"/>
    </location>
</feature>
<feature type="disulfide bond" evidence="2">
    <location>
        <begin position="181"/>
        <end position="231"/>
    </location>
</feature>
<feature type="disulfide bond" evidence="2">
    <location>
        <begin position="191"/>
        <end position="233"/>
    </location>
</feature>
<evidence type="ECO:0000250" key="1"/>
<evidence type="ECO:0000250" key="2">
    <source>
        <dbReference type="UniProtKB" id="P61898"/>
    </source>
</evidence>
<evidence type="ECO:0000250" key="3">
    <source>
        <dbReference type="UniProtKB" id="P61899"/>
    </source>
</evidence>
<evidence type="ECO:0000255" key="4"/>
<evidence type="ECO:0000256" key="5">
    <source>
        <dbReference type="SAM" id="MobiDB-lite"/>
    </source>
</evidence>
<evidence type="ECO:0000305" key="6"/>
<dbReference type="EMBL" id="DQ917528">
    <property type="protein sequence ID" value="ABK63557.1"/>
    <property type="molecule type" value="mRNA"/>
</dbReference>
<dbReference type="SMR" id="A6MFL7"/>
<dbReference type="GO" id="GO:0030424">
    <property type="term" value="C:axon"/>
    <property type="evidence" value="ECO:0007669"/>
    <property type="project" value="TreeGrafter"/>
</dbReference>
<dbReference type="GO" id="GO:0030425">
    <property type="term" value="C:dendrite"/>
    <property type="evidence" value="ECO:0007669"/>
    <property type="project" value="TreeGrafter"/>
</dbReference>
<dbReference type="GO" id="GO:0005615">
    <property type="term" value="C:extracellular space"/>
    <property type="evidence" value="ECO:0007669"/>
    <property type="project" value="TreeGrafter"/>
</dbReference>
<dbReference type="GO" id="GO:0008021">
    <property type="term" value="C:synaptic vesicle"/>
    <property type="evidence" value="ECO:0007669"/>
    <property type="project" value="TreeGrafter"/>
</dbReference>
<dbReference type="GO" id="GO:0008083">
    <property type="term" value="F:growth factor activity"/>
    <property type="evidence" value="ECO:0007669"/>
    <property type="project" value="UniProtKB-KW"/>
</dbReference>
<dbReference type="GO" id="GO:0008289">
    <property type="term" value="F:lipid binding"/>
    <property type="evidence" value="ECO:0007669"/>
    <property type="project" value="UniProtKB-KW"/>
</dbReference>
<dbReference type="GO" id="GO:0008191">
    <property type="term" value="F:metalloendopeptidase inhibitor activity"/>
    <property type="evidence" value="ECO:0000250"/>
    <property type="project" value="UniProtKB"/>
</dbReference>
<dbReference type="GO" id="GO:0005163">
    <property type="term" value="F:nerve growth factor receptor binding"/>
    <property type="evidence" value="ECO:0007669"/>
    <property type="project" value="TreeGrafter"/>
</dbReference>
<dbReference type="GO" id="GO:0090729">
    <property type="term" value="F:toxin activity"/>
    <property type="evidence" value="ECO:0007669"/>
    <property type="project" value="UniProtKB-KW"/>
</dbReference>
<dbReference type="GO" id="GO:0007169">
    <property type="term" value="P:cell surface receptor protein tyrosine kinase signaling pathway"/>
    <property type="evidence" value="ECO:0007669"/>
    <property type="project" value="TreeGrafter"/>
</dbReference>
<dbReference type="GO" id="GO:0050804">
    <property type="term" value="P:modulation of chemical synaptic transmission"/>
    <property type="evidence" value="ECO:0007669"/>
    <property type="project" value="TreeGrafter"/>
</dbReference>
<dbReference type="GO" id="GO:0043524">
    <property type="term" value="P:negative regulation of neuron apoptotic process"/>
    <property type="evidence" value="ECO:0007669"/>
    <property type="project" value="TreeGrafter"/>
</dbReference>
<dbReference type="GO" id="GO:0021675">
    <property type="term" value="P:nerve development"/>
    <property type="evidence" value="ECO:0007669"/>
    <property type="project" value="TreeGrafter"/>
</dbReference>
<dbReference type="GO" id="GO:0038180">
    <property type="term" value="P:nerve growth factor signaling pathway"/>
    <property type="evidence" value="ECO:0007669"/>
    <property type="project" value="TreeGrafter"/>
</dbReference>
<dbReference type="GO" id="GO:0048812">
    <property type="term" value="P:neuron projection morphogenesis"/>
    <property type="evidence" value="ECO:0007669"/>
    <property type="project" value="TreeGrafter"/>
</dbReference>
<dbReference type="FunFam" id="2.10.90.10:FF:000002">
    <property type="entry name" value="Brain-derived neurotrophic factor"/>
    <property type="match status" value="1"/>
</dbReference>
<dbReference type="Gene3D" id="2.10.90.10">
    <property type="entry name" value="Cystine-knot cytokines"/>
    <property type="match status" value="1"/>
</dbReference>
<dbReference type="InterPro" id="IPR029034">
    <property type="entry name" value="Cystine-knot_cytokine"/>
</dbReference>
<dbReference type="InterPro" id="IPR020408">
    <property type="entry name" value="Nerve_growth_factor-like"/>
</dbReference>
<dbReference type="InterPro" id="IPR002072">
    <property type="entry name" value="Nerve_growth_factor-rel"/>
</dbReference>
<dbReference type="InterPro" id="IPR020425">
    <property type="entry name" value="Nerve_growth_factor_bsu"/>
</dbReference>
<dbReference type="InterPro" id="IPR019846">
    <property type="entry name" value="Nerve_growth_factor_CS"/>
</dbReference>
<dbReference type="InterPro" id="IPR020433">
    <property type="entry name" value="Venom_nerve_growth_factor"/>
</dbReference>
<dbReference type="PANTHER" id="PTHR11589:SF10">
    <property type="entry name" value="BETA-NERVE GROWTH FACTOR"/>
    <property type="match status" value="1"/>
</dbReference>
<dbReference type="PANTHER" id="PTHR11589">
    <property type="entry name" value="NERVE GROWTH FACTOR NGF -RELATED"/>
    <property type="match status" value="1"/>
</dbReference>
<dbReference type="Pfam" id="PF00243">
    <property type="entry name" value="NGF"/>
    <property type="match status" value="1"/>
</dbReference>
<dbReference type="PIRSF" id="PIRSF001789">
    <property type="entry name" value="NGF"/>
    <property type="match status" value="1"/>
</dbReference>
<dbReference type="PRINTS" id="PR00268">
    <property type="entry name" value="NGF"/>
</dbReference>
<dbReference type="PRINTS" id="PR01913">
    <property type="entry name" value="NGFBETA"/>
</dbReference>
<dbReference type="PRINTS" id="PR01917">
    <property type="entry name" value="VENOMNGF"/>
</dbReference>
<dbReference type="SMART" id="SM00140">
    <property type="entry name" value="NGF"/>
    <property type="match status" value="1"/>
</dbReference>
<dbReference type="SUPFAM" id="SSF57501">
    <property type="entry name" value="Cystine-knot cytokines"/>
    <property type="match status" value="1"/>
</dbReference>
<dbReference type="PROSITE" id="PS00248">
    <property type="entry name" value="NGF_1"/>
    <property type="match status" value="1"/>
</dbReference>
<dbReference type="PROSITE" id="PS50270">
    <property type="entry name" value="NGF_2"/>
    <property type="match status" value="1"/>
</dbReference>
<accession>A6MFL7</accession>
<protein>
    <recommendedName>
        <fullName>Venom nerve growth factor 3</fullName>
        <shortName>v-NGF-3</shortName>
        <shortName>vNGF-3</shortName>
    </recommendedName>
</protein>
<sequence length="242" mass="27210">MSMLCYTLIIAFLIGIWAAPKSEDNVPLGSPATSDLSDTSCAQTHEALKTSRNTDQRHPAPKKAEDQELGSAANIIVDPKLFQKRRFQSPRVLFSTQPPPLSRDEQSVEFLENEDALNRNIRSKRENHPVNDHGEYSVCDSVSVWVNKTTATDIKGKPVTVMVDVNLNNHVYKQYFFETKCKNPNPVPSGCRGIDSRHWNSYCTTTQSFVKALTKEGNQASWRFIRIDTACVCVISRKTGNF</sequence>
<reference key="1">
    <citation type="journal article" date="2006" name="Proteomics">
        <title>Post-translational modification accounts for the presence of varied forms of nerve growth factor in Australian elapid snake venoms.</title>
        <authorList>
            <person name="Earl S.T.H."/>
            <person name="Birrell G.W."/>
            <person name="Wallis T.P."/>
            <person name="St Pierre L."/>
            <person name="Masci P.P."/>
            <person name="de Jersey J."/>
            <person name="Gorman J.J."/>
            <person name="Lavin M.F."/>
        </authorList>
    </citation>
    <scope>NUCLEOTIDE SEQUENCE [MRNA]</scope>
    <source>
        <tissue>Venom gland</tissue>
    </source>
</reference>
<reference key="2">
    <citation type="journal article" date="2007" name="J. Proteome Res.">
        <title>Diversity of toxic components from the venom of the evolutionarily distinct black whip snake, Demansia vestigiata.</title>
        <authorList>
            <person name="St Pierre L."/>
            <person name="Birrell G.W."/>
            <person name="Earl S.T.H."/>
            <person name="Wallis T.P."/>
            <person name="Gorman J.J."/>
            <person name="de Jersey J."/>
            <person name="Masci P.P."/>
            <person name="Lavin M.F."/>
        </authorList>
    </citation>
    <scope>NUCLEOTIDE SEQUENCE [MRNA]</scope>
    <source>
        <tissue>Venom gland</tissue>
    </source>
</reference>
<proteinExistence type="evidence at transcript level"/>